<sequence length="145" mass="15863">MIALIQRALSASVVVEGNIVGEIGPGLLVLLGVEQGDTEQKAQRLCERVLGYRIFSDENDKMNLNVQQAGGSVLVVSQFTLVADTQKGMRPSFSRGAIPQEADRLYQYFVAQCRERGVKTETGLFAADMKVSLVNDGPVTFWLQV</sequence>
<keyword id="KW-0963">Cytoplasm</keyword>
<keyword id="KW-0378">Hydrolase</keyword>
<keyword id="KW-0694">RNA-binding</keyword>
<keyword id="KW-0820">tRNA-binding</keyword>
<evidence type="ECO:0000255" key="1">
    <source>
        <dbReference type="HAMAP-Rule" id="MF_00518"/>
    </source>
</evidence>
<reference key="1">
    <citation type="journal article" date="2010" name="J. Bacteriol.">
        <title>Genome sequence of the deep-rooted Yersinia pestis strain Angola reveals new insights into the evolution and pangenome of the plague bacterium.</title>
        <authorList>
            <person name="Eppinger M."/>
            <person name="Worsham P.L."/>
            <person name="Nikolich M.P."/>
            <person name="Riley D.R."/>
            <person name="Sebastian Y."/>
            <person name="Mou S."/>
            <person name="Achtman M."/>
            <person name="Lindler L.E."/>
            <person name="Ravel J."/>
        </authorList>
    </citation>
    <scope>NUCLEOTIDE SEQUENCE [LARGE SCALE GENOMIC DNA]</scope>
    <source>
        <strain>Angola</strain>
    </source>
</reference>
<accession>A9R655</accession>
<comment type="function">
    <text evidence="1">An aminoacyl-tRNA editing enzyme that deacylates mischarged D-aminoacyl-tRNAs. Also deacylates mischarged glycyl-tRNA(Ala), protecting cells against glycine mischarging by AlaRS. Acts via tRNA-based rather than protein-based catalysis; rejects L-amino acids rather than detecting D-amino acids in the active site. By recycling D-aminoacyl-tRNA to D-amino acids and free tRNA molecules, this enzyme counteracts the toxicity associated with the formation of D-aminoacyl-tRNA entities in vivo and helps enforce protein L-homochirality.</text>
</comment>
<comment type="catalytic activity">
    <reaction evidence="1">
        <text>glycyl-tRNA(Ala) + H2O = tRNA(Ala) + glycine + H(+)</text>
        <dbReference type="Rhea" id="RHEA:53744"/>
        <dbReference type="Rhea" id="RHEA-COMP:9657"/>
        <dbReference type="Rhea" id="RHEA-COMP:13640"/>
        <dbReference type="ChEBI" id="CHEBI:15377"/>
        <dbReference type="ChEBI" id="CHEBI:15378"/>
        <dbReference type="ChEBI" id="CHEBI:57305"/>
        <dbReference type="ChEBI" id="CHEBI:78442"/>
        <dbReference type="ChEBI" id="CHEBI:78522"/>
        <dbReference type="EC" id="3.1.1.96"/>
    </reaction>
</comment>
<comment type="catalytic activity">
    <reaction evidence="1">
        <text>a D-aminoacyl-tRNA + H2O = a tRNA + a D-alpha-amino acid + H(+)</text>
        <dbReference type="Rhea" id="RHEA:13953"/>
        <dbReference type="Rhea" id="RHEA-COMP:10123"/>
        <dbReference type="Rhea" id="RHEA-COMP:10124"/>
        <dbReference type="ChEBI" id="CHEBI:15377"/>
        <dbReference type="ChEBI" id="CHEBI:15378"/>
        <dbReference type="ChEBI" id="CHEBI:59871"/>
        <dbReference type="ChEBI" id="CHEBI:78442"/>
        <dbReference type="ChEBI" id="CHEBI:79333"/>
        <dbReference type="EC" id="3.1.1.96"/>
    </reaction>
</comment>
<comment type="subunit">
    <text evidence="1">Homodimer.</text>
</comment>
<comment type="subcellular location">
    <subcellularLocation>
        <location evidence="1">Cytoplasm</location>
    </subcellularLocation>
</comment>
<comment type="domain">
    <text evidence="1">A Gly-cisPro motif from one monomer fits into the active site of the other monomer to allow specific chiral rejection of L-amino acids.</text>
</comment>
<comment type="similarity">
    <text evidence="1">Belongs to the DTD family.</text>
</comment>
<gene>
    <name evidence="1" type="primary">dtd</name>
    <name type="ordered locus">YpAngola_A0035</name>
</gene>
<name>DTD_YERPG</name>
<dbReference type="EC" id="3.1.1.96" evidence="1"/>
<dbReference type="EMBL" id="CP000901">
    <property type="protein sequence ID" value="ABX87646.1"/>
    <property type="molecule type" value="Genomic_DNA"/>
</dbReference>
<dbReference type="RefSeq" id="WP_002209009.1">
    <property type="nucleotide sequence ID" value="NZ_CP009935.1"/>
</dbReference>
<dbReference type="SMR" id="A9R655"/>
<dbReference type="GeneID" id="57974561"/>
<dbReference type="KEGG" id="ypg:YpAngola_A0035"/>
<dbReference type="PATRIC" id="fig|349746.12.peg.978"/>
<dbReference type="GO" id="GO:0005737">
    <property type="term" value="C:cytoplasm"/>
    <property type="evidence" value="ECO:0007669"/>
    <property type="project" value="UniProtKB-SubCell"/>
</dbReference>
<dbReference type="GO" id="GO:0051500">
    <property type="term" value="F:D-tyrosyl-tRNA(Tyr) deacylase activity"/>
    <property type="evidence" value="ECO:0007669"/>
    <property type="project" value="TreeGrafter"/>
</dbReference>
<dbReference type="GO" id="GO:0106026">
    <property type="term" value="F:Gly-tRNA(Ala) deacylase activity"/>
    <property type="evidence" value="ECO:0007669"/>
    <property type="project" value="UniProtKB-UniRule"/>
</dbReference>
<dbReference type="GO" id="GO:0043908">
    <property type="term" value="F:Ser(Gly)-tRNA(Ala) hydrolase activity"/>
    <property type="evidence" value="ECO:0007669"/>
    <property type="project" value="UniProtKB-UniRule"/>
</dbReference>
<dbReference type="GO" id="GO:0000049">
    <property type="term" value="F:tRNA binding"/>
    <property type="evidence" value="ECO:0007669"/>
    <property type="project" value="UniProtKB-UniRule"/>
</dbReference>
<dbReference type="GO" id="GO:0019478">
    <property type="term" value="P:D-amino acid catabolic process"/>
    <property type="evidence" value="ECO:0007669"/>
    <property type="project" value="UniProtKB-UniRule"/>
</dbReference>
<dbReference type="CDD" id="cd00563">
    <property type="entry name" value="Dtyr_deacylase"/>
    <property type="match status" value="1"/>
</dbReference>
<dbReference type="FunFam" id="3.50.80.10:FF:000001">
    <property type="entry name" value="D-aminoacyl-tRNA deacylase"/>
    <property type="match status" value="1"/>
</dbReference>
<dbReference type="Gene3D" id="3.50.80.10">
    <property type="entry name" value="D-tyrosyl-tRNA(Tyr) deacylase"/>
    <property type="match status" value="1"/>
</dbReference>
<dbReference type="HAMAP" id="MF_00518">
    <property type="entry name" value="Deacylase_Dtd"/>
    <property type="match status" value="1"/>
</dbReference>
<dbReference type="InterPro" id="IPR003732">
    <property type="entry name" value="Daa-tRNA_deacyls_DTD"/>
</dbReference>
<dbReference type="InterPro" id="IPR023509">
    <property type="entry name" value="DTD-like_sf"/>
</dbReference>
<dbReference type="NCBIfam" id="TIGR00256">
    <property type="entry name" value="D-aminoacyl-tRNA deacylase"/>
    <property type="match status" value="1"/>
</dbReference>
<dbReference type="PANTHER" id="PTHR10472:SF5">
    <property type="entry name" value="D-AMINOACYL-TRNA DEACYLASE 1"/>
    <property type="match status" value="1"/>
</dbReference>
<dbReference type="PANTHER" id="PTHR10472">
    <property type="entry name" value="D-TYROSYL-TRNA TYR DEACYLASE"/>
    <property type="match status" value="1"/>
</dbReference>
<dbReference type="Pfam" id="PF02580">
    <property type="entry name" value="Tyr_Deacylase"/>
    <property type="match status" value="1"/>
</dbReference>
<dbReference type="SUPFAM" id="SSF69500">
    <property type="entry name" value="DTD-like"/>
    <property type="match status" value="1"/>
</dbReference>
<organism>
    <name type="scientific">Yersinia pestis bv. Antiqua (strain Angola)</name>
    <dbReference type="NCBI Taxonomy" id="349746"/>
    <lineage>
        <taxon>Bacteria</taxon>
        <taxon>Pseudomonadati</taxon>
        <taxon>Pseudomonadota</taxon>
        <taxon>Gammaproteobacteria</taxon>
        <taxon>Enterobacterales</taxon>
        <taxon>Yersiniaceae</taxon>
        <taxon>Yersinia</taxon>
    </lineage>
</organism>
<protein>
    <recommendedName>
        <fullName evidence="1">D-aminoacyl-tRNA deacylase</fullName>
        <shortName evidence="1">DTD</shortName>
        <ecNumber evidence="1">3.1.1.96</ecNumber>
    </recommendedName>
    <alternativeName>
        <fullName evidence="1">Gly-tRNA(Ala) deacylase</fullName>
    </alternativeName>
</protein>
<proteinExistence type="inferred from homology"/>
<feature type="chain" id="PRO_1000127594" description="D-aminoacyl-tRNA deacylase">
    <location>
        <begin position="1"/>
        <end position="145"/>
    </location>
</feature>
<feature type="short sequence motif" description="Gly-cisPro motif, important for rejection of L-amino acids" evidence="1">
    <location>
        <begin position="137"/>
        <end position="138"/>
    </location>
</feature>